<accession>A7H054</accession>
<evidence type="ECO:0000255" key="1">
    <source>
        <dbReference type="HAMAP-Rule" id="MF_01815"/>
    </source>
</evidence>
<gene>
    <name evidence="1" type="primary">fabH</name>
    <name type="ordered locus">Ccur92_15420</name>
    <name type="ORF">CCV52592_1699</name>
</gene>
<sequence>MLKASLISIASYVPEKILTNFDLEKMVDTSDEWIVKRTGIKERHIAEGEITSDLGTKAAKLAIKRAGLEKPQIDTIICATMSPDHLCMPSTACKIAANLGLDYGITAFDISAACTGFIYLLQLANSLIKSGAKKNVLIVGAEKLSSVVDYTDRSTCILFGDGAGAAIISASNENEIIDIHTASDGTQSHLLITPGCGSAYPASDETLAKRLNFIHMSGNEVFKIAVQTLTKSVIEILERNNMTSRDIDFFVPHQANIRIIEAVKQRLDFKDEQCVLTIAKYGNTSSASIPMAINDAYESGRIKNGSTLLLDAFGGGFTWGSAILKFGGKNFYQI</sequence>
<organism>
    <name type="scientific">Campylobacter curvus (strain 525.92)</name>
    <dbReference type="NCBI Taxonomy" id="360105"/>
    <lineage>
        <taxon>Bacteria</taxon>
        <taxon>Pseudomonadati</taxon>
        <taxon>Campylobacterota</taxon>
        <taxon>Epsilonproteobacteria</taxon>
        <taxon>Campylobacterales</taxon>
        <taxon>Campylobacteraceae</taxon>
        <taxon>Campylobacter</taxon>
    </lineage>
</organism>
<protein>
    <recommendedName>
        <fullName evidence="1">Beta-ketoacyl-[acyl-carrier-protein] synthase III</fullName>
        <shortName evidence="1">Beta-ketoacyl-ACP synthase III</shortName>
        <shortName evidence="1">KAS III</shortName>
        <ecNumber evidence="1">2.3.1.180</ecNumber>
    </recommendedName>
    <alternativeName>
        <fullName evidence="1">3-oxoacyl-[acyl-carrier-protein] synthase 3</fullName>
    </alternativeName>
    <alternativeName>
        <fullName evidence="1">3-oxoacyl-[acyl-carrier-protein] synthase III</fullName>
    </alternativeName>
</protein>
<dbReference type="EC" id="2.3.1.180" evidence="1"/>
<dbReference type="EMBL" id="CP000767">
    <property type="protein sequence ID" value="EAU01074.1"/>
    <property type="molecule type" value="Genomic_DNA"/>
</dbReference>
<dbReference type="RefSeq" id="WP_011992647.1">
    <property type="nucleotide sequence ID" value="NC_009715.2"/>
</dbReference>
<dbReference type="SMR" id="A7H054"/>
<dbReference type="STRING" id="360105.CCV52592_1699"/>
<dbReference type="KEGG" id="ccv:CCV52592_1699"/>
<dbReference type="HOGENOM" id="CLU_039592_4_1_7"/>
<dbReference type="OrthoDB" id="9815506at2"/>
<dbReference type="UniPathway" id="UPA00094"/>
<dbReference type="Proteomes" id="UP000006380">
    <property type="component" value="Chromosome"/>
</dbReference>
<dbReference type="GO" id="GO:0005737">
    <property type="term" value="C:cytoplasm"/>
    <property type="evidence" value="ECO:0007669"/>
    <property type="project" value="UniProtKB-SubCell"/>
</dbReference>
<dbReference type="GO" id="GO:0004315">
    <property type="term" value="F:3-oxoacyl-[acyl-carrier-protein] synthase activity"/>
    <property type="evidence" value="ECO:0007669"/>
    <property type="project" value="InterPro"/>
</dbReference>
<dbReference type="GO" id="GO:0033818">
    <property type="term" value="F:beta-ketoacyl-acyl-carrier-protein synthase III activity"/>
    <property type="evidence" value="ECO:0007669"/>
    <property type="project" value="UniProtKB-UniRule"/>
</dbReference>
<dbReference type="GO" id="GO:0006633">
    <property type="term" value="P:fatty acid biosynthetic process"/>
    <property type="evidence" value="ECO:0007669"/>
    <property type="project" value="UniProtKB-UniRule"/>
</dbReference>
<dbReference type="GO" id="GO:0044550">
    <property type="term" value="P:secondary metabolite biosynthetic process"/>
    <property type="evidence" value="ECO:0007669"/>
    <property type="project" value="TreeGrafter"/>
</dbReference>
<dbReference type="CDD" id="cd00830">
    <property type="entry name" value="KAS_III"/>
    <property type="match status" value="1"/>
</dbReference>
<dbReference type="FunFam" id="3.40.47.10:FF:000004">
    <property type="entry name" value="3-oxoacyl-[acyl-carrier-protein] synthase 3"/>
    <property type="match status" value="1"/>
</dbReference>
<dbReference type="Gene3D" id="3.40.47.10">
    <property type="match status" value="1"/>
</dbReference>
<dbReference type="HAMAP" id="MF_01815">
    <property type="entry name" value="FabH"/>
    <property type="match status" value="1"/>
</dbReference>
<dbReference type="InterPro" id="IPR013747">
    <property type="entry name" value="ACP_syn_III_C"/>
</dbReference>
<dbReference type="InterPro" id="IPR013751">
    <property type="entry name" value="ACP_syn_III_N"/>
</dbReference>
<dbReference type="InterPro" id="IPR004655">
    <property type="entry name" value="FabH"/>
</dbReference>
<dbReference type="InterPro" id="IPR016039">
    <property type="entry name" value="Thiolase-like"/>
</dbReference>
<dbReference type="NCBIfam" id="TIGR00747">
    <property type="entry name" value="fabH"/>
    <property type="match status" value="1"/>
</dbReference>
<dbReference type="NCBIfam" id="NF006829">
    <property type="entry name" value="PRK09352.1"/>
    <property type="match status" value="1"/>
</dbReference>
<dbReference type="PANTHER" id="PTHR34069">
    <property type="entry name" value="3-OXOACYL-[ACYL-CARRIER-PROTEIN] SYNTHASE 3"/>
    <property type="match status" value="1"/>
</dbReference>
<dbReference type="PANTHER" id="PTHR34069:SF2">
    <property type="entry name" value="BETA-KETOACYL-[ACYL-CARRIER-PROTEIN] SYNTHASE III"/>
    <property type="match status" value="1"/>
</dbReference>
<dbReference type="Pfam" id="PF08545">
    <property type="entry name" value="ACP_syn_III"/>
    <property type="match status" value="1"/>
</dbReference>
<dbReference type="Pfam" id="PF08541">
    <property type="entry name" value="ACP_syn_III_C"/>
    <property type="match status" value="1"/>
</dbReference>
<dbReference type="SUPFAM" id="SSF53901">
    <property type="entry name" value="Thiolase-like"/>
    <property type="match status" value="1"/>
</dbReference>
<feature type="chain" id="PRO_1000056333" description="Beta-ketoacyl-[acyl-carrier-protein] synthase III">
    <location>
        <begin position="1"/>
        <end position="334"/>
    </location>
</feature>
<feature type="region of interest" description="ACP-binding" evidence="1">
    <location>
        <begin position="254"/>
        <end position="258"/>
    </location>
</feature>
<feature type="active site" evidence="1">
    <location>
        <position position="114"/>
    </location>
</feature>
<feature type="active site" evidence="1">
    <location>
        <position position="253"/>
    </location>
</feature>
<feature type="active site" evidence="1">
    <location>
        <position position="283"/>
    </location>
</feature>
<proteinExistence type="inferred from homology"/>
<reference key="1">
    <citation type="submission" date="2007-07" db="EMBL/GenBank/DDBJ databases">
        <title>Genome sequence of Campylobacter curvus 525.92 isolated from human feces.</title>
        <authorList>
            <person name="Fouts D.E."/>
            <person name="Mongodin E.F."/>
            <person name="Puiu D."/>
            <person name="Sebastian Y."/>
            <person name="Miller W.G."/>
            <person name="Mandrell R.E."/>
            <person name="Lastovica A.J."/>
            <person name="Nelson K.E."/>
        </authorList>
    </citation>
    <scope>NUCLEOTIDE SEQUENCE [LARGE SCALE GENOMIC DNA]</scope>
    <source>
        <strain>525.92</strain>
    </source>
</reference>
<name>FABH_CAMC5</name>
<comment type="function">
    <text evidence="1">Catalyzes the condensation reaction of fatty acid synthesis by the addition to an acyl acceptor of two carbons from malonyl-ACP. Catalyzes the first condensation reaction which initiates fatty acid synthesis and may therefore play a role in governing the total rate of fatty acid production. Possesses both acetoacetyl-ACP synthase and acetyl transacylase activities. Its substrate specificity determines the biosynthesis of branched-chain and/or straight-chain of fatty acids.</text>
</comment>
<comment type="catalytic activity">
    <reaction evidence="1">
        <text>malonyl-[ACP] + acetyl-CoA + H(+) = 3-oxobutanoyl-[ACP] + CO2 + CoA</text>
        <dbReference type="Rhea" id="RHEA:12080"/>
        <dbReference type="Rhea" id="RHEA-COMP:9623"/>
        <dbReference type="Rhea" id="RHEA-COMP:9625"/>
        <dbReference type="ChEBI" id="CHEBI:15378"/>
        <dbReference type="ChEBI" id="CHEBI:16526"/>
        <dbReference type="ChEBI" id="CHEBI:57287"/>
        <dbReference type="ChEBI" id="CHEBI:57288"/>
        <dbReference type="ChEBI" id="CHEBI:78449"/>
        <dbReference type="ChEBI" id="CHEBI:78450"/>
        <dbReference type="EC" id="2.3.1.180"/>
    </reaction>
</comment>
<comment type="pathway">
    <text evidence="1">Lipid metabolism; fatty acid biosynthesis.</text>
</comment>
<comment type="subunit">
    <text evidence="1">Homodimer.</text>
</comment>
<comment type="subcellular location">
    <subcellularLocation>
        <location evidence="1">Cytoplasm</location>
    </subcellularLocation>
</comment>
<comment type="domain">
    <text evidence="1">The last Arg residue of the ACP-binding site is essential for the weak association between ACP/AcpP and FabH.</text>
</comment>
<comment type="similarity">
    <text evidence="1">Belongs to the thiolase-like superfamily. FabH family.</text>
</comment>
<keyword id="KW-0012">Acyltransferase</keyword>
<keyword id="KW-0963">Cytoplasm</keyword>
<keyword id="KW-0275">Fatty acid biosynthesis</keyword>
<keyword id="KW-0276">Fatty acid metabolism</keyword>
<keyword id="KW-0444">Lipid biosynthesis</keyword>
<keyword id="KW-0443">Lipid metabolism</keyword>
<keyword id="KW-0511">Multifunctional enzyme</keyword>
<keyword id="KW-1185">Reference proteome</keyword>
<keyword id="KW-0808">Transferase</keyword>